<proteinExistence type="inferred from homology"/>
<comment type="subcellular location">
    <subcellularLocation>
        <location evidence="1">Cell inner membrane</location>
        <topology evidence="1">Multi-pass membrane protein</topology>
    </subcellularLocation>
</comment>
<comment type="similarity">
    <text evidence="1">Belongs to the UPF0266 family.</text>
</comment>
<feature type="chain" id="PRO_1000136653" description="UPF0266 membrane protein YPTS_1754">
    <location>
        <begin position="1"/>
        <end position="153"/>
    </location>
</feature>
<feature type="transmembrane region" description="Helical" evidence="1">
    <location>
        <begin position="6"/>
        <end position="26"/>
    </location>
</feature>
<feature type="transmembrane region" description="Helical" evidence="1">
    <location>
        <begin position="45"/>
        <end position="65"/>
    </location>
</feature>
<feature type="transmembrane region" description="Helical" evidence="1">
    <location>
        <begin position="67"/>
        <end position="87"/>
    </location>
</feature>
<evidence type="ECO:0000255" key="1">
    <source>
        <dbReference type="HAMAP-Rule" id="MF_01071"/>
    </source>
</evidence>
<protein>
    <recommendedName>
        <fullName evidence="1">UPF0266 membrane protein YPTS_1754</fullName>
    </recommendedName>
</protein>
<reference key="1">
    <citation type="submission" date="2008-04" db="EMBL/GenBank/DDBJ databases">
        <title>Complete sequence of Yersinia pseudotuberculosis PB1/+.</title>
        <authorList>
            <person name="Copeland A."/>
            <person name="Lucas S."/>
            <person name="Lapidus A."/>
            <person name="Glavina del Rio T."/>
            <person name="Dalin E."/>
            <person name="Tice H."/>
            <person name="Bruce D."/>
            <person name="Goodwin L."/>
            <person name="Pitluck S."/>
            <person name="Munk A.C."/>
            <person name="Brettin T."/>
            <person name="Detter J.C."/>
            <person name="Han C."/>
            <person name="Tapia R."/>
            <person name="Schmutz J."/>
            <person name="Larimer F."/>
            <person name="Land M."/>
            <person name="Hauser L."/>
            <person name="Challacombe J.F."/>
            <person name="Green L."/>
            <person name="Lindler L.E."/>
            <person name="Nikolich M.P."/>
            <person name="Richardson P."/>
        </authorList>
    </citation>
    <scope>NUCLEOTIDE SEQUENCE [LARGE SCALE GENOMIC DNA]</scope>
    <source>
        <strain>PB1/+</strain>
    </source>
</reference>
<name>Y1754_YERPB</name>
<accession>B2K0F2</accession>
<gene>
    <name type="ordered locus">YPTS_1754</name>
</gene>
<dbReference type="EMBL" id="CP001048">
    <property type="protein sequence ID" value="ACC88721.1"/>
    <property type="molecule type" value="Genomic_DNA"/>
</dbReference>
<dbReference type="RefSeq" id="WP_002211066.1">
    <property type="nucleotide sequence ID" value="NZ_CP009780.1"/>
</dbReference>
<dbReference type="KEGG" id="ypb:YPTS_1754"/>
<dbReference type="PATRIC" id="fig|502801.10.peg.1132"/>
<dbReference type="GO" id="GO:0005886">
    <property type="term" value="C:plasma membrane"/>
    <property type="evidence" value="ECO:0007669"/>
    <property type="project" value="UniProtKB-SubCell"/>
</dbReference>
<dbReference type="HAMAP" id="MF_01071">
    <property type="entry name" value="UPF0266"/>
    <property type="match status" value="1"/>
</dbReference>
<dbReference type="InterPro" id="IPR009328">
    <property type="entry name" value="DUF986"/>
</dbReference>
<dbReference type="NCBIfam" id="NF002791">
    <property type="entry name" value="PRK02913.1"/>
    <property type="match status" value="1"/>
</dbReference>
<dbReference type="Pfam" id="PF06173">
    <property type="entry name" value="DUF986"/>
    <property type="match status" value="1"/>
</dbReference>
<dbReference type="PIRSF" id="PIRSF020687">
    <property type="entry name" value="UCP020687"/>
    <property type="match status" value="1"/>
</dbReference>
<organism>
    <name type="scientific">Yersinia pseudotuberculosis serotype IB (strain PB1/+)</name>
    <dbReference type="NCBI Taxonomy" id="502801"/>
    <lineage>
        <taxon>Bacteria</taxon>
        <taxon>Pseudomonadati</taxon>
        <taxon>Pseudomonadota</taxon>
        <taxon>Gammaproteobacteria</taxon>
        <taxon>Enterobacterales</taxon>
        <taxon>Yersiniaceae</taxon>
        <taxon>Yersinia</taxon>
    </lineage>
</organism>
<keyword id="KW-0997">Cell inner membrane</keyword>
<keyword id="KW-1003">Cell membrane</keyword>
<keyword id="KW-0472">Membrane</keyword>
<keyword id="KW-0812">Transmembrane</keyword>
<keyword id="KW-1133">Transmembrane helix</keyword>
<sequence>MSVTDLVLVVFIALLLIYAIYDEFIMNMMKGKTRLQVHLKRKNKLDCMIFVGLIGILIYNNVMAHGAPLTTYLLVGLALVAVYISYIRWPKLLFKNTGFFYANTFIEYSRIKSMNLSEDGILVIDLEQRRLLIQVKKLDDLEKIYNFFIENQS</sequence>